<dbReference type="EC" id="6.3.4.19" evidence="1"/>
<dbReference type="EMBL" id="CP000436">
    <property type="protein sequence ID" value="ABI25209.1"/>
    <property type="molecule type" value="Genomic_DNA"/>
</dbReference>
<dbReference type="SMR" id="Q0I3D1"/>
<dbReference type="KEGG" id="hso:HS_0934"/>
<dbReference type="eggNOG" id="COG0037">
    <property type="taxonomic scope" value="Bacteria"/>
</dbReference>
<dbReference type="HOGENOM" id="CLU_018869_2_0_6"/>
<dbReference type="GO" id="GO:0005737">
    <property type="term" value="C:cytoplasm"/>
    <property type="evidence" value="ECO:0007669"/>
    <property type="project" value="UniProtKB-SubCell"/>
</dbReference>
<dbReference type="GO" id="GO:0005524">
    <property type="term" value="F:ATP binding"/>
    <property type="evidence" value="ECO:0007669"/>
    <property type="project" value="UniProtKB-UniRule"/>
</dbReference>
<dbReference type="GO" id="GO:0032267">
    <property type="term" value="F:tRNA(Ile)-lysidine synthase activity"/>
    <property type="evidence" value="ECO:0007669"/>
    <property type="project" value="UniProtKB-EC"/>
</dbReference>
<dbReference type="GO" id="GO:0006400">
    <property type="term" value="P:tRNA modification"/>
    <property type="evidence" value="ECO:0007669"/>
    <property type="project" value="UniProtKB-UniRule"/>
</dbReference>
<dbReference type="CDD" id="cd01992">
    <property type="entry name" value="TilS_N"/>
    <property type="match status" value="1"/>
</dbReference>
<dbReference type="Gene3D" id="1.20.59.20">
    <property type="match status" value="1"/>
</dbReference>
<dbReference type="Gene3D" id="3.40.50.620">
    <property type="entry name" value="HUPs"/>
    <property type="match status" value="1"/>
</dbReference>
<dbReference type="HAMAP" id="MF_01161">
    <property type="entry name" value="tRNA_Ile_lys_synt"/>
    <property type="match status" value="1"/>
</dbReference>
<dbReference type="InterPro" id="IPR012796">
    <property type="entry name" value="Lysidine-tRNA-synth_C"/>
</dbReference>
<dbReference type="InterPro" id="IPR014729">
    <property type="entry name" value="Rossmann-like_a/b/a_fold"/>
</dbReference>
<dbReference type="InterPro" id="IPR011063">
    <property type="entry name" value="TilS/TtcA_N"/>
</dbReference>
<dbReference type="InterPro" id="IPR012094">
    <property type="entry name" value="tRNA_Ile_lys_synt"/>
</dbReference>
<dbReference type="InterPro" id="IPR012795">
    <property type="entry name" value="tRNA_Ile_lys_synt_N"/>
</dbReference>
<dbReference type="InterPro" id="IPR015262">
    <property type="entry name" value="tRNA_Ile_lys_synt_subst-bd"/>
</dbReference>
<dbReference type="NCBIfam" id="TIGR02433">
    <property type="entry name" value="lysidine_TilS_C"/>
    <property type="match status" value="1"/>
</dbReference>
<dbReference type="NCBIfam" id="TIGR02432">
    <property type="entry name" value="lysidine_TilS_N"/>
    <property type="match status" value="1"/>
</dbReference>
<dbReference type="PANTHER" id="PTHR43033">
    <property type="entry name" value="TRNA(ILE)-LYSIDINE SYNTHASE-RELATED"/>
    <property type="match status" value="1"/>
</dbReference>
<dbReference type="PANTHER" id="PTHR43033:SF1">
    <property type="entry name" value="TRNA(ILE)-LYSIDINE SYNTHASE-RELATED"/>
    <property type="match status" value="1"/>
</dbReference>
<dbReference type="Pfam" id="PF01171">
    <property type="entry name" value="ATP_bind_3"/>
    <property type="match status" value="1"/>
</dbReference>
<dbReference type="Pfam" id="PF09179">
    <property type="entry name" value="TilS"/>
    <property type="match status" value="1"/>
</dbReference>
<dbReference type="Pfam" id="PF11734">
    <property type="entry name" value="TilS_C"/>
    <property type="match status" value="1"/>
</dbReference>
<dbReference type="SMART" id="SM00977">
    <property type="entry name" value="TilS_C"/>
    <property type="match status" value="1"/>
</dbReference>
<dbReference type="SUPFAM" id="SSF52402">
    <property type="entry name" value="Adenine nucleotide alpha hydrolases-like"/>
    <property type="match status" value="1"/>
</dbReference>
<dbReference type="SUPFAM" id="SSF82829">
    <property type="entry name" value="MesJ substrate recognition domain-like"/>
    <property type="match status" value="1"/>
</dbReference>
<dbReference type="SUPFAM" id="SSF56037">
    <property type="entry name" value="PheT/TilS domain"/>
    <property type="match status" value="1"/>
</dbReference>
<keyword id="KW-0067">ATP-binding</keyword>
<keyword id="KW-0963">Cytoplasm</keyword>
<keyword id="KW-0436">Ligase</keyword>
<keyword id="KW-0547">Nucleotide-binding</keyword>
<keyword id="KW-0819">tRNA processing</keyword>
<reference key="1">
    <citation type="journal article" date="2007" name="J. Bacteriol.">
        <title>Complete genome sequence of Haemophilus somnus (Histophilus somni) strain 129Pt and comparison to Haemophilus ducreyi 35000HP and Haemophilus influenzae Rd.</title>
        <authorList>
            <person name="Challacombe J.F."/>
            <person name="Duncan A.J."/>
            <person name="Brettin T.S."/>
            <person name="Bruce D."/>
            <person name="Chertkov O."/>
            <person name="Detter J.C."/>
            <person name="Han C.S."/>
            <person name="Misra M."/>
            <person name="Richardson P."/>
            <person name="Tapia R."/>
            <person name="Thayer N."/>
            <person name="Xie G."/>
            <person name="Inzana T.J."/>
        </authorList>
    </citation>
    <scope>NUCLEOTIDE SEQUENCE [LARGE SCALE GENOMIC DNA]</scope>
    <source>
        <strain>129Pt</strain>
    </source>
</reference>
<sequence>MDLLQQLQNQLNQFPSHTKLLLGFSGGLDSTVLLSLLAKLRKKQPHLSLRAIHIHHGLSQNADNWAIHCRQICQQLDISFLCEKVTINPRKGIEADAREARYQAIANHLQDNEILVTAHHQQDQTETFLLALKRGSGLQGLGAMQIQSVVFNLPIFRPLLHCTRQQLEQYAKTEKLSWIEDESNADNRYDRNFLRNDILPKLRQRWQHIDKAIQRSAQHCFEQQQLINELLNDEFNKIYDKFDRTLSIANFATYSILKQKALLRTWLQHLHILMPSTIQLDNIMRNMIQAQEDRNPTCKLGNQVLRRYQKRLYATPILQDLSHIRLDIQANECINLPDNLGEICLLTKNEHLQVTWQDKQILLPLTQEKIEIRFRYSGKVKLPQGFHQEMKKCWQDHNVPIWQRTRIPLIFYGDTFKSAVGFFDNFE</sequence>
<gene>
    <name evidence="1" type="primary">tilS</name>
    <name type="ordered locus">HS_0934</name>
</gene>
<organism>
    <name type="scientific">Histophilus somni (strain 129Pt)</name>
    <name type="common">Haemophilus somnus</name>
    <dbReference type="NCBI Taxonomy" id="205914"/>
    <lineage>
        <taxon>Bacteria</taxon>
        <taxon>Pseudomonadati</taxon>
        <taxon>Pseudomonadota</taxon>
        <taxon>Gammaproteobacteria</taxon>
        <taxon>Pasteurellales</taxon>
        <taxon>Pasteurellaceae</taxon>
        <taxon>Histophilus</taxon>
    </lineage>
</organism>
<accession>Q0I3D1</accession>
<name>TILS_HISS1</name>
<evidence type="ECO:0000255" key="1">
    <source>
        <dbReference type="HAMAP-Rule" id="MF_01161"/>
    </source>
</evidence>
<comment type="function">
    <text evidence="1">Ligates lysine onto the cytidine present at position 34 of the AUA codon-specific tRNA(Ile) that contains the anticodon CAU, in an ATP-dependent manner. Cytidine is converted to lysidine, thus changing the amino acid specificity of the tRNA from methionine to isoleucine.</text>
</comment>
<comment type="catalytic activity">
    <reaction evidence="1">
        <text>cytidine(34) in tRNA(Ile2) + L-lysine + ATP = lysidine(34) in tRNA(Ile2) + AMP + diphosphate + H(+)</text>
        <dbReference type="Rhea" id="RHEA:43744"/>
        <dbReference type="Rhea" id="RHEA-COMP:10625"/>
        <dbReference type="Rhea" id="RHEA-COMP:10670"/>
        <dbReference type="ChEBI" id="CHEBI:15378"/>
        <dbReference type="ChEBI" id="CHEBI:30616"/>
        <dbReference type="ChEBI" id="CHEBI:32551"/>
        <dbReference type="ChEBI" id="CHEBI:33019"/>
        <dbReference type="ChEBI" id="CHEBI:82748"/>
        <dbReference type="ChEBI" id="CHEBI:83665"/>
        <dbReference type="ChEBI" id="CHEBI:456215"/>
        <dbReference type="EC" id="6.3.4.19"/>
    </reaction>
</comment>
<comment type="subcellular location">
    <subcellularLocation>
        <location evidence="1">Cytoplasm</location>
    </subcellularLocation>
</comment>
<comment type="domain">
    <text>The N-terminal region contains the highly conserved SGGXDS motif, predicted to be a P-loop motif involved in ATP binding.</text>
</comment>
<comment type="similarity">
    <text evidence="1">Belongs to the tRNA(Ile)-lysidine synthase family.</text>
</comment>
<feature type="chain" id="PRO_1000137871" description="tRNA(Ile)-lysidine synthase">
    <location>
        <begin position="1"/>
        <end position="427"/>
    </location>
</feature>
<feature type="binding site" evidence="1">
    <location>
        <begin position="25"/>
        <end position="30"/>
    </location>
    <ligand>
        <name>ATP</name>
        <dbReference type="ChEBI" id="CHEBI:30616"/>
    </ligand>
</feature>
<protein>
    <recommendedName>
        <fullName evidence="1">tRNA(Ile)-lysidine synthase</fullName>
        <ecNumber evidence="1">6.3.4.19</ecNumber>
    </recommendedName>
    <alternativeName>
        <fullName evidence="1">tRNA(Ile)-2-lysyl-cytidine synthase</fullName>
    </alternativeName>
    <alternativeName>
        <fullName evidence="1">tRNA(Ile)-lysidine synthetase</fullName>
    </alternativeName>
</protein>
<proteinExistence type="inferred from homology"/>